<reference key="1">
    <citation type="journal article" date="2002" name="Proc. Natl. Acad. Sci. U.S.A.">
        <title>Genome sequence of a serotype M3 strain of group A Streptococcus: phage-encoded toxins, the high-virulence phenotype, and clone emergence.</title>
        <authorList>
            <person name="Beres S.B."/>
            <person name="Sylva G.L."/>
            <person name="Barbian K.D."/>
            <person name="Lei B."/>
            <person name="Hoff J.S."/>
            <person name="Mammarella N.D."/>
            <person name="Liu M.-Y."/>
            <person name="Smoot J.C."/>
            <person name="Porcella S.F."/>
            <person name="Parkins L.D."/>
            <person name="Campbell D.S."/>
            <person name="Smith T.M."/>
            <person name="McCormick J.K."/>
            <person name="Leung D.Y.M."/>
            <person name="Schlievert P.M."/>
            <person name="Musser J.M."/>
        </authorList>
    </citation>
    <scope>NUCLEOTIDE SEQUENCE [LARGE SCALE GENOMIC DNA]</scope>
    <source>
        <strain>ATCC BAA-595 / MGAS315</strain>
    </source>
</reference>
<feature type="chain" id="PRO_0000145420" description="DNA topoisomerase 4 subunit A">
    <location>
        <begin position="1"/>
        <end position="819"/>
    </location>
</feature>
<feature type="domain" description="Topo IIA-type catalytic" evidence="2">
    <location>
        <begin position="30"/>
        <end position="496"/>
    </location>
</feature>
<feature type="active site" description="O-(5'-phospho-DNA)-tyrosine intermediate" evidence="1">
    <location>
        <position position="118"/>
    </location>
</feature>
<feature type="site" description="Interaction with DNA" evidence="1">
    <location>
        <position position="38"/>
    </location>
</feature>
<feature type="site" description="Interaction with DNA" evidence="1">
    <location>
        <position position="74"/>
    </location>
</feature>
<feature type="site" description="Interaction with DNA" evidence="1">
    <location>
        <position position="76"/>
    </location>
</feature>
<feature type="site" description="Interaction with DNA" evidence="1">
    <location>
        <position position="87"/>
    </location>
</feature>
<feature type="site" description="Interaction with DNA" evidence="1">
    <location>
        <position position="93"/>
    </location>
</feature>
<feature type="site" description="Transition state stabilizer" evidence="1">
    <location>
        <position position="117"/>
    </location>
</feature>
<accession>P0DG06</accession>
<accession>Q878K1</accession>
<accession>Q8K7U6</accession>
<keyword id="KW-1003">Cell membrane</keyword>
<keyword id="KW-0238">DNA-binding</keyword>
<keyword id="KW-0413">Isomerase</keyword>
<keyword id="KW-0472">Membrane</keyword>
<keyword id="KW-0799">Topoisomerase</keyword>
<sequence length="819" mass="92466">MSNIQNMSLEDIMGERFGRYSKYIIQERALPDIRDGLKPVQRRILYSMNKDGNTFEKGYRKSAKSVGNIMGNFHPHGDSSIYDAMVRMSQDWKNREILVEMHGNNGSMDGDPPAAMRYTEARLSEIAGYLLQDIEKNTVSFAWNFDDTEKEPTVLPAAFPNLLVNGSSGISAGYATDIPPHNLSEVIDAVVYMIDHPKASLEKLMEFLPGPDFPTGGIIQGADEIKKAYETGKGRVVVRSRTEIEELKGGKQQIIVTEIPYEVNKAVLVKKIDDVRVNNKVPGIVEVRDESDRTGLRIAIELKKEADSQTILNYLLKYTDLQVNYNFNMVAIDHFTPRQVGLQKILSSYISHRKDIIIERSKFDKAKAEKRLHIVEGLIRVLSILDEIIALIRSSDNKADAKENLKVSYDFSEEQAEAIVTLQLYRLTNTDIVTLQNEENDLRDLITTLSAIIGDEATMYNVMKRELREVKKKFANPRLSELQAESQIIEIDTASLIAEEETFVSVTRGGYLKRTSPRSFNASSLEEVGKRDDDELIFVKQAKTTEHLLLFTTLGNVIYRPIHELTDLRWKDIGEHLSQTISNFATEEEILYADIVTSFDQGLYVAVTQNGFIKRFDRKELSPWRTYKSKSTKYVKLKDDKDRVVTLSPVIMEDLLLVTKNGYALRFSSQEVPIQGLKSAGVKGINLKNDDSLASAFAVTSNSFFVLTQRGSLKRMAVDDIPQTSRANRGLLVLRELKTKPHRVFLAGGVQSDTSAEQFDLFTDIPEEETNQQMLEVISKTGQTYEIALETLSLSERTSNGSFISDTISDQEVLVARTR</sequence>
<name>PARC_STRP3</name>
<protein>
    <recommendedName>
        <fullName evidence="1">DNA topoisomerase 4 subunit A</fullName>
        <ecNumber evidence="1">5.6.2.2</ecNumber>
    </recommendedName>
    <alternativeName>
        <fullName evidence="1">Topoisomerase IV subunit A</fullName>
    </alternativeName>
</protein>
<evidence type="ECO:0000255" key="1">
    <source>
        <dbReference type="HAMAP-Rule" id="MF_00937"/>
    </source>
</evidence>
<evidence type="ECO:0000255" key="2">
    <source>
        <dbReference type="PROSITE-ProRule" id="PRU01384"/>
    </source>
</evidence>
<evidence type="ECO:0000305" key="3"/>
<proteinExistence type="inferred from homology"/>
<comment type="function">
    <text evidence="1">Topoisomerase IV is essential for chromosome segregation. It relaxes supercoiled DNA. Performs the decatenation events required during the replication of a circular DNA molecule.</text>
</comment>
<comment type="catalytic activity">
    <reaction evidence="1">
        <text>ATP-dependent breakage, passage and rejoining of double-stranded DNA.</text>
        <dbReference type="EC" id="5.6.2.2"/>
    </reaction>
</comment>
<comment type="subunit">
    <text evidence="1">Heterotetramer composed of ParC and ParE.</text>
</comment>
<comment type="subcellular location">
    <subcellularLocation>
        <location evidence="1">Cell membrane</location>
        <topology evidence="1">Peripheral membrane protein</topology>
    </subcellularLocation>
</comment>
<comment type="similarity">
    <text evidence="1">Belongs to the type II topoisomerase GyrA/ParC subunit family. ParC type 2 subfamily.</text>
</comment>
<comment type="sequence caution" evidence="3">
    <conflict type="erroneous initiation">
        <sequence resource="EMBL-CDS" id="AAM79232"/>
    </conflict>
    <text>Truncated N-terminus.</text>
</comment>
<dbReference type="EC" id="5.6.2.2" evidence="1"/>
<dbReference type="EMBL" id="AE014074">
    <property type="protein sequence ID" value="AAM79232.1"/>
    <property type="status" value="ALT_INIT"/>
    <property type="molecule type" value="Genomic_DNA"/>
</dbReference>
<dbReference type="RefSeq" id="WP_011054387.1">
    <property type="nucleotide sequence ID" value="NC_004070.1"/>
</dbReference>
<dbReference type="SMR" id="P0DG06"/>
<dbReference type="ChEMBL" id="CHEMBL3991503"/>
<dbReference type="KEGG" id="spg:SpyM3_0625"/>
<dbReference type="HOGENOM" id="CLU_002977_6_1_9"/>
<dbReference type="Proteomes" id="UP000000564">
    <property type="component" value="Chromosome"/>
</dbReference>
<dbReference type="GO" id="GO:0005694">
    <property type="term" value="C:chromosome"/>
    <property type="evidence" value="ECO:0007669"/>
    <property type="project" value="InterPro"/>
</dbReference>
<dbReference type="GO" id="GO:0005737">
    <property type="term" value="C:cytoplasm"/>
    <property type="evidence" value="ECO:0007669"/>
    <property type="project" value="TreeGrafter"/>
</dbReference>
<dbReference type="GO" id="GO:0009330">
    <property type="term" value="C:DNA topoisomerase type II (double strand cut, ATP-hydrolyzing) complex"/>
    <property type="evidence" value="ECO:0007669"/>
    <property type="project" value="TreeGrafter"/>
</dbReference>
<dbReference type="GO" id="GO:0019897">
    <property type="term" value="C:extrinsic component of plasma membrane"/>
    <property type="evidence" value="ECO:0007669"/>
    <property type="project" value="UniProtKB-UniRule"/>
</dbReference>
<dbReference type="GO" id="GO:0005524">
    <property type="term" value="F:ATP binding"/>
    <property type="evidence" value="ECO:0007669"/>
    <property type="project" value="InterPro"/>
</dbReference>
<dbReference type="GO" id="GO:0003677">
    <property type="term" value="F:DNA binding"/>
    <property type="evidence" value="ECO:0007669"/>
    <property type="project" value="UniProtKB-UniRule"/>
</dbReference>
<dbReference type="GO" id="GO:0034335">
    <property type="term" value="F:DNA negative supercoiling activity"/>
    <property type="evidence" value="ECO:0007669"/>
    <property type="project" value="UniProtKB-ARBA"/>
</dbReference>
<dbReference type="GO" id="GO:0007059">
    <property type="term" value="P:chromosome segregation"/>
    <property type="evidence" value="ECO:0007669"/>
    <property type="project" value="UniProtKB-UniRule"/>
</dbReference>
<dbReference type="GO" id="GO:0006265">
    <property type="term" value="P:DNA topological change"/>
    <property type="evidence" value="ECO:0007669"/>
    <property type="project" value="UniProtKB-UniRule"/>
</dbReference>
<dbReference type="CDD" id="cd00187">
    <property type="entry name" value="TOP4c"/>
    <property type="match status" value="1"/>
</dbReference>
<dbReference type="FunFam" id="1.10.268.10:FF:000001">
    <property type="entry name" value="DNA gyrase subunit A"/>
    <property type="match status" value="1"/>
</dbReference>
<dbReference type="FunFam" id="3.30.1360.40:FF:000002">
    <property type="entry name" value="DNA gyrase subunit A"/>
    <property type="match status" value="1"/>
</dbReference>
<dbReference type="FunFam" id="3.90.199.10:FF:000001">
    <property type="entry name" value="DNA gyrase subunit A"/>
    <property type="match status" value="1"/>
</dbReference>
<dbReference type="FunFam" id="2.120.10.90:FF:000005">
    <property type="entry name" value="DNA topoisomerase 4 subunit A"/>
    <property type="match status" value="1"/>
</dbReference>
<dbReference type="Gene3D" id="3.30.1360.40">
    <property type="match status" value="1"/>
</dbReference>
<dbReference type="Gene3D" id="2.120.10.90">
    <property type="entry name" value="DNA gyrase/topoisomerase IV, subunit A, C-terminal"/>
    <property type="match status" value="1"/>
</dbReference>
<dbReference type="Gene3D" id="3.90.199.10">
    <property type="entry name" value="Topoisomerase II, domain 5"/>
    <property type="match status" value="1"/>
</dbReference>
<dbReference type="Gene3D" id="1.10.268.10">
    <property type="entry name" value="Topoisomerase, domain 3"/>
    <property type="match status" value="1"/>
</dbReference>
<dbReference type="HAMAP" id="MF_00937">
    <property type="entry name" value="ParC_type2"/>
    <property type="match status" value="1"/>
</dbReference>
<dbReference type="InterPro" id="IPR006691">
    <property type="entry name" value="GyrA/parC_rep"/>
</dbReference>
<dbReference type="InterPro" id="IPR035516">
    <property type="entry name" value="Gyrase/topoIV_suA_C"/>
</dbReference>
<dbReference type="InterPro" id="IPR013760">
    <property type="entry name" value="Topo_IIA-like_dom_sf"/>
</dbReference>
<dbReference type="InterPro" id="IPR013758">
    <property type="entry name" value="Topo_IIA_A/C_ab"/>
</dbReference>
<dbReference type="InterPro" id="IPR013757">
    <property type="entry name" value="Topo_IIA_A_a_sf"/>
</dbReference>
<dbReference type="InterPro" id="IPR002205">
    <property type="entry name" value="Topo_IIA_dom_A"/>
</dbReference>
<dbReference type="InterPro" id="IPR005741">
    <property type="entry name" value="TopoIV_A_Gpos"/>
</dbReference>
<dbReference type="InterPro" id="IPR050220">
    <property type="entry name" value="Type_II_DNA_Topoisomerases"/>
</dbReference>
<dbReference type="NCBIfam" id="TIGR01061">
    <property type="entry name" value="parC_Gpos"/>
    <property type="match status" value="1"/>
</dbReference>
<dbReference type="NCBIfam" id="NF004044">
    <property type="entry name" value="PRK05561.1"/>
    <property type="match status" value="1"/>
</dbReference>
<dbReference type="PANTHER" id="PTHR43493">
    <property type="entry name" value="DNA GYRASE/TOPOISOMERASE SUBUNIT A"/>
    <property type="match status" value="1"/>
</dbReference>
<dbReference type="PANTHER" id="PTHR43493:SF9">
    <property type="entry name" value="DNA TOPOISOMERASE 4 SUBUNIT A"/>
    <property type="match status" value="1"/>
</dbReference>
<dbReference type="Pfam" id="PF03989">
    <property type="entry name" value="DNA_gyraseA_C"/>
    <property type="match status" value="4"/>
</dbReference>
<dbReference type="Pfam" id="PF00521">
    <property type="entry name" value="DNA_topoisoIV"/>
    <property type="match status" value="1"/>
</dbReference>
<dbReference type="SMART" id="SM00434">
    <property type="entry name" value="TOP4c"/>
    <property type="match status" value="1"/>
</dbReference>
<dbReference type="SUPFAM" id="SSF101904">
    <property type="entry name" value="GyrA/ParC C-terminal domain-like"/>
    <property type="match status" value="1"/>
</dbReference>
<dbReference type="SUPFAM" id="SSF56719">
    <property type="entry name" value="Type II DNA topoisomerase"/>
    <property type="match status" value="1"/>
</dbReference>
<dbReference type="PROSITE" id="PS52040">
    <property type="entry name" value="TOPO_IIA"/>
    <property type="match status" value="1"/>
</dbReference>
<organism>
    <name type="scientific">Streptococcus pyogenes serotype M3 (strain ATCC BAA-595 / MGAS315)</name>
    <dbReference type="NCBI Taxonomy" id="198466"/>
    <lineage>
        <taxon>Bacteria</taxon>
        <taxon>Bacillati</taxon>
        <taxon>Bacillota</taxon>
        <taxon>Bacilli</taxon>
        <taxon>Lactobacillales</taxon>
        <taxon>Streptococcaceae</taxon>
        <taxon>Streptococcus</taxon>
    </lineage>
</organism>
<gene>
    <name evidence="1" type="primary">parC</name>
    <name type="ordered locus">SpyM3_0625</name>
</gene>